<organism>
    <name type="scientific">Wolinella succinogenes (strain ATCC 29543 / DSM 1740 / CCUG 13145 / JCM 31913 / LMG 7466 / NCTC 11488 / FDC 602W)</name>
    <name type="common">Vibrio succinogenes</name>
    <dbReference type="NCBI Taxonomy" id="273121"/>
    <lineage>
        <taxon>Bacteria</taxon>
        <taxon>Pseudomonadati</taxon>
        <taxon>Campylobacterota</taxon>
        <taxon>Epsilonproteobacteria</taxon>
        <taxon>Campylobacterales</taxon>
        <taxon>Helicobacteraceae</taxon>
        <taxon>Wolinella</taxon>
    </lineage>
</organism>
<feature type="chain" id="PRO_0000023185" description="Aspartate 1-decarboxylase beta chain" evidence="1">
    <location>
        <begin position="1"/>
        <end position="24"/>
    </location>
</feature>
<feature type="chain" id="PRO_0000023186" description="Aspartate 1-decarboxylase alpha chain" evidence="1">
    <location>
        <begin position="25"/>
        <end position="121"/>
    </location>
</feature>
<feature type="active site" description="Schiff-base intermediate with substrate; via pyruvic acid" evidence="1">
    <location>
        <position position="25"/>
    </location>
</feature>
<feature type="active site" description="Proton donor" evidence="1">
    <location>
        <position position="58"/>
    </location>
</feature>
<feature type="binding site" evidence="1">
    <location>
        <position position="57"/>
    </location>
    <ligand>
        <name>substrate</name>
    </ligand>
</feature>
<feature type="binding site" evidence="1">
    <location>
        <begin position="73"/>
        <end position="75"/>
    </location>
    <ligand>
        <name>substrate</name>
    </ligand>
</feature>
<feature type="modified residue" description="Pyruvic acid (Ser)" evidence="1">
    <location>
        <position position="25"/>
    </location>
</feature>
<accession>O34246</accession>
<name>PAND_WOLSU</name>
<dbReference type="EC" id="4.1.1.11" evidence="1"/>
<dbReference type="EMBL" id="AJ003049">
    <property type="protein sequence ID" value="CAA05822.1"/>
    <property type="molecule type" value="Genomic_DNA"/>
</dbReference>
<dbReference type="EMBL" id="BX571661">
    <property type="protein sequence ID" value="CAE10709.1"/>
    <property type="molecule type" value="Genomic_DNA"/>
</dbReference>
<dbReference type="RefSeq" id="WP_011139493.1">
    <property type="nucleotide sequence ID" value="NC_005090.1"/>
</dbReference>
<dbReference type="SMR" id="O34246"/>
<dbReference type="STRING" id="273121.WS1682"/>
<dbReference type="KEGG" id="wsu:WS1682"/>
<dbReference type="eggNOG" id="COG0853">
    <property type="taxonomic scope" value="Bacteria"/>
</dbReference>
<dbReference type="HOGENOM" id="CLU_115305_2_0_7"/>
<dbReference type="UniPathway" id="UPA00028">
    <property type="reaction ID" value="UER00002"/>
</dbReference>
<dbReference type="Proteomes" id="UP000000422">
    <property type="component" value="Chromosome"/>
</dbReference>
<dbReference type="GO" id="GO:0005829">
    <property type="term" value="C:cytosol"/>
    <property type="evidence" value="ECO:0007669"/>
    <property type="project" value="TreeGrafter"/>
</dbReference>
<dbReference type="GO" id="GO:0004068">
    <property type="term" value="F:aspartate 1-decarboxylase activity"/>
    <property type="evidence" value="ECO:0007669"/>
    <property type="project" value="UniProtKB-UniRule"/>
</dbReference>
<dbReference type="GO" id="GO:0006523">
    <property type="term" value="P:alanine biosynthetic process"/>
    <property type="evidence" value="ECO:0007669"/>
    <property type="project" value="InterPro"/>
</dbReference>
<dbReference type="GO" id="GO:0015940">
    <property type="term" value="P:pantothenate biosynthetic process"/>
    <property type="evidence" value="ECO:0007669"/>
    <property type="project" value="UniProtKB-UniRule"/>
</dbReference>
<dbReference type="CDD" id="cd06919">
    <property type="entry name" value="Asp_decarbox"/>
    <property type="match status" value="1"/>
</dbReference>
<dbReference type="Gene3D" id="2.40.40.20">
    <property type="match status" value="1"/>
</dbReference>
<dbReference type="HAMAP" id="MF_00446">
    <property type="entry name" value="PanD"/>
    <property type="match status" value="1"/>
</dbReference>
<dbReference type="InterPro" id="IPR009010">
    <property type="entry name" value="Asp_de-COase-like_dom_sf"/>
</dbReference>
<dbReference type="InterPro" id="IPR003190">
    <property type="entry name" value="Asp_decarbox"/>
</dbReference>
<dbReference type="NCBIfam" id="TIGR00223">
    <property type="entry name" value="panD"/>
    <property type="match status" value="1"/>
</dbReference>
<dbReference type="PANTHER" id="PTHR21012">
    <property type="entry name" value="ASPARTATE 1-DECARBOXYLASE"/>
    <property type="match status" value="1"/>
</dbReference>
<dbReference type="PANTHER" id="PTHR21012:SF0">
    <property type="entry name" value="ASPARTATE 1-DECARBOXYLASE"/>
    <property type="match status" value="1"/>
</dbReference>
<dbReference type="Pfam" id="PF02261">
    <property type="entry name" value="Asp_decarbox"/>
    <property type="match status" value="1"/>
</dbReference>
<dbReference type="PIRSF" id="PIRSF006246">
    <property type="entry name" value="Asp_decarbox"/>
    <property type="match status" value="1"/>
</dbReference>
<dbReference type="SUPFAM" id="SSF50692">
    <property type="entry name" value="ADC-like"/>
    <property type="match status" value="1"/>
</dbReference>
<sequence length="121" mass="13602">MKFDMLWSKIHRATVTDANLNYVGSITIDEELMEAAELLVGQKVEILDVNNGERFSTYVIRGERGSREICLNGAAARKVAIGDKIIIVAYAQYDRSELSSYKPTVVLVDEKNDIVQIKHEV</sequence>
<proteinExistence type="inferred from homology"/>
<keyword id="KW-0068">Autocatalytic cleavage</keyword>
<keyword id="KW-0963">Cytoplasm</keyword>
<keyword id="KW-0210">Decarboxylase</keyword>
<keyword id="KW-0456">Lyase</keyword>
<keyword id="KW-0566">Pantothenate biosynthesis</keyword>
<keyword id="KW-0670">Pyruvate</keyword>
<keyword id="KW-1185">Reference proteome</keyword>
<keyword id="KW-0704">Schiff base</keyword>
<keyword id="KW-0865">Zymogen</keyword>
<gene>
    <name evidence="1" type="primary">panD</name>
    <name type="ordered locus">WS1682</name>
</gene>
<protein>
    <recommendedName>
        <fullName evidence="1">Aspartate 1-decarboxylase</fullName>
        <ecNumber evidence="1">4.1.1.11</ecNumber>
    </recommendedName>
    <alternativeName>
        <fullName evidence="1">Aspartate alpha-decarboxylase</fullName>
    </alternativeName>
    <component>
        <recommendedName>
            <fullName evidence="1">Aspartate 1-decarboxylase beta chain</fullName>
        </recommendedName>
    </component>
    <component>
        <recommendedName>
            <fullName evidence="1">Aspartate 1-decarboxylase alpha chain</fullName>
        </recommendedName>
    </component>
</protein>
<comment type="function">
    <text evidence="1">Catalyzes the pyruvoyl-dependent decarboxylation of aspartate to produce beta-alanine.</text>
</comment>
<comment type="catalytic activity">
    <reaction evidence="1">
        <text>L-aspartate + H(+) = beta-alanine + CO2</text>
        <dbReference type="Rhea" id="RHEA:19497"/>
        <dbReference type="ChEBI" id="CHEBI:15378"/>
        <dbReference type="ChEBI" id="CHEBI:16526"/>
        <dbReference type="ChEBI" id="CHEBI:29991"/>
        <dbReference type="ChEBI" id="CHEBI:57966"/>
        <dbReference type="EC" id="4.1.1.11"/>
    </reaction>
</comment>
<comment type="cofactor">
    <cofactor evidence="1">
        <name>pyruvate</name>
        <dbReference type="ChEBI" id="CHEBI:15361"/>
    </cofactor>
    <text evidence="1">Binds 1 pyruvoyl group covalently per subunit.</text>
</comment>
<comment type="pathway">
    <text evidence="1">Cofactor biosynthesis; (R)-pantothenate biosynthesis; beta-alanine from L-aspartate: step 1/1.</text>
</comment>
<comment type="subunit">
    <text evidence="1">Heterooctamer of four alpha and four beta subunits.</text>
</comment>
<comment type="subcellular location">
    <subcellularLocation>
        <location evidence="1">Cytoplasm</location>
    </subcellularLocation>
</comment>
<comment type="PTM">
    <text evidence="1">Is synthesized initially as an inactive proenzyme, which is activated by self-cleavage at a specific serine bond to produce a beta-subunit with a hydroxyl group at its C-terminus and an alpha-subunit with a pyruvoyl group at its N-terminus.</text>
</comment>
<comment type="similarity">
    <text evidence="1">Belongs to the PanD family.</text>
</comment>
<evidence type="ECO:0000255" key="1">
    <source>
        <dbReference type="HAMAP-Rule" id="MF_00446"/>
    </source>
</evidence>
<reference key="1">
    <citation type="journal article" date="1998" name="Arch. Microbiol.">
        <title>Two membrane anchors of Wolinella succinogenes hydrogenase and their function in fumarate and polysulfide respiration.</title>
        <authorList>
            <person name="Gross R."/>
            <person name="Simon J."/>
            <person name="Theis F."/>
            <person name="Kroeger A."/>
        </authorList>
    </citation>
    <scope>NUCLEOTIDE SEQUENCE [GENOMIC DNA]</scope>
    <source>
        <strain>ATCC 29543 / DSM 1740 / CCUG 13145 / JCM 31913 / LMG 7466 / NCTC 11488 / FDC 602W</strain>
    </source>
</reference>
<reference key="2">
    <citation type="journal article" date="2003" name="Proc. Natl. Acad. Sci. U.S.A.">
        <title>Complete genome sequence and analysis of Wolinella succinogenes.</title>
        <authorList>
            <person name="Baar C."/>
            <person name="Eppinger M."/>
            <person name="Raddatz G."/>
            <person name="Simon J."/>
            <person name="Lanz C."/>
            <person name="Klimmek O."/>
            <person name="Nandakumar R."/>
            <person name="Gross R."/>
            <person name="Rosinus A."/>
            <person name="Keller H."/>
            <person name="Jagtap P."/>
            <person name="Linke B."/>
            <person name="Meyer F."/>
            <person name="Lederer H."/>
            <person name="Schuster S.C."/>
        </authorList>
    </citation>
    <scope>NUCLEOTIDE SEQUENCE [LARGE SCALE GENOMIC DNA]</scope>
    <source>
        <strain>ATCC 29543 / DSM 1740 / CCUG 13145 / JCM 31913 / LMG 7466 / NCTC 11488 / FDC 602W</strain>
    </source>
</reference>